<accession>Q6MPV7</accession>
<evidence type="ECO:0000255" key="1">
    <source>
        <dbReference type="HAMAP-Rule" id="MF_01849"/>
    </source>
</evidence>
<evidence type="ECO:0000255" key="2">
    <source>
        <dbReference type="PROSITE-ProRule" id="PRU01266"/>
    </source>
</evidence>
<gene>
    <name evidence="1" type="primary">rlmN</name>
    <name type="ordered locus">Bd0733</name>
</gene>
<proteinExistence type="inferred from homology"/>
<comment type="function">
    <text evidence="1">Specifically methylates position 2 of adenine 2503 in 23S rRNA and position 2 of adenine 37 in tRNAs. m2A2503 modification seems to play a crucial role in the proofreading step occurring at the peptidyl transferase center and thus would serve to optimize ribosomal fidelity.</text>
</comment>
<comment type="catalytic activity">
    <reaction evidence="1">
        <text>adenosine(2503) in 23S rRNA + 2 reduced [2Fe-2S]-[ferredoxin] + 2 S-adenosyl-L-methionine = 2-methyladenosine(2503) in 23S rRNA + 5'-deoxyadenosine + L-methionine + 2 oxidized [2Fe-2S]-[ferredoxin] + S-adenosyl-L-homocysteine</text>
        <dbReference type="Rhea" id="RHEA:42916"/>
        <dbReference type="Rhea" id="RHEA-COMP:10000"/>
        <dbReference type="Rhea" id="RHEA-COMP:10001"/>
        <dbReference type="Rhea" id="RHEA-COMP:10152"/>
        <dbReference type="Rhea" id="RHEA-COMP:10282"/>
        <dbReference type="ChEBI" id="CHEBI:17319"/>
        <dbReference type="ChEBI" id="CHEBI:33737"/>
        <dbReference type="ChEBI" id="CHEBI:33738"/>
        <dbReference type="ChEBI" id="CHEBI:57844"/>
        <dbReference type="ChEBI" id="CHEBI:57856"/>
        <dbReference type="ChEBI" id="CHEBI:59789"/>
        <dbReference type="ChEBI" id="CHEBI:74411"/>
        <dbReference type="ChEBI" id="CHEBI:74497"/>
        <dbReference type="EC" id="2.1.1.192"/>
    </reaction>
</comment>
<comment type="catalytic activity">
    <reaction evidence="1">
        <text>adenosine(37) in tRNA + 2 reduced [2Fe-2S]-[ferredoxin] + 2 S-adenosyl-L-methionine = 2-methyladenosine(37) in tRNA + 5'-deoxyadenosine + L-methionine + 2 oxidized [2Fe-2S]-[ferredoxin] + S-adenosyl-L-homocysteine</text>
        <dbReference type="Rhea" id="RHEA:43332"/>
        <dbReference type="Rhea" id="RHEA-COMP:10000"/>
        <dbReference type="Rhea" id="RHEA-COMP:10001"/>
        <dbReference type="Rhea" id="RHEA-COMP:10162"/>
        <dbReference type="Rhea" id="RHEA-COMP:10485"/>
        <dbReference type="ChEBI" id="CHEBI:17319"/>
        <dbReference type="ChEBI" id="CHEBI:33737"/>
        <dbReference type="ChEBI" id="CHEBI:33738"/>
        <dbReference type="ChEBI" id="CHEBI:57844"/>
        <dbReference type="ChEBI" id="CHEBI:57856"/>
        <dbReference type="ChEBI" id="CHEBI:59789"/>
        <dbReference type="ChEBI" id="CHEBI:74411"/>
        <dbReference type="ChEBI" id="CHEBI:74497"/>
        <dbReference type="EC" id="2.1.1.192"/>
    </reaction>
</comment>
<comment type="cofactor">
    <cofactor evidence="1">
        <name>[4Fe-4S] cluster</name>
        <dbReference type="ChEBI" id="CHEBI:49883"/>
    </cofactor>
    <text evidence="1">Binds 1 [4Fe-4S] cluster. The cluster is coordinated with 3 cysteines and an exchangeable S-adenosyl-L-methionine.</text>
</comment>
<comment type="subcellular location">
    <subcellularLocation>
        <location evidence="1">Cytoplasm</location>
    </subcellularLocation>
</comment>
<comment type="miscellaneous">
    <text evidence="1">Reaction proceeds by a ping-pong mechanism involving intermediate methylation of a conserved cysteine residue.</text>
</comment>
<comment type="similarity">
    <text evidence="1">Belongs to the radical SAM superfamily. RlmN family.</text>
</comment>
<dbReference type="EC" id="2.1.1.192" evidence="1"/>
<dbReference type="EMBL" id="BX842647">
    <property type="protein sequence ID" value="CAE78690.1"/>
    <property type="molecule type" value="Genomic_DNA"/>
</dbReference>
<dbReference type="RefSeq" id="WP_011163292.1">
    <property type="nucleotide sequence ID" value="NC_005363.1"/>
</dbReference>
<dbReference type="SMR" id="Q6MPV7"/>
<dbReference type="STRING" id="264462.Bd0733"/>
<dbReference type="GeneID" id="93011819"/>
<dbReference type="KEGG" id="bba:Bd0733"/>
<dbReference type="eggNOG" id="COG0820">
    <property type="taxonomic scope" value="Bacteria"/>
</dbReference>
<dbReference type="HOGENOM" id="CLU_029101_2_0_7"/>
<dbReference type="Proteomes" id="UP000008080">
    <property type="component" value="Chromosome"/>
</dbReference>
<dbReference type="GO" id="GO:0005737">
    <property type="term" value="C:cytoplasm"/>
    <property type="evidence" value="ECO:0007669"/>
    <property type="project" value="UniProtKB-SubCell"/>
</dbReference>
<dbReference type="GO" id="GO:0051539">
    <property type="term" value="F:4 iron, 4 sulfur cluster binding"/>
    <property type="evidence" value="ECO:0007669"/>
    <property type="project" value="UniProtKB-UniRule"/>
</dbReference>
<dbReference type="GO" id="GO:0046872">
    <property type="term" value="F:metal ion binding"/>
    <property type="evidence" value="ECO:0007669"/>
    <property type="project" value="UniProtKB-KW"/>
</dbReference>
<dbReference type="GO" id="GO:0070040">
    <property type="term" value="F:rRNA (adenine(2503)-C2-)-methyltransferase activity"/>
    <property type="evidence" value="ECO:0007669"/>
    <property type="project" value="UniProtKB-UniRule"/>
</dbReference>
<dbReference type="GO" id="GO:0019843">
    <property type="term" value="F:rRNA binding"/>
    <property type="evidence" value="ECO:0007669"/>
    <property type="project" value="UniProtKB-UniRule"/>
</dbReference>
<dbReference type="GO" id="GO:0002935">
    <property type="term" value="F:tRNA (adenine(37)-C2)-methyltransferase activity"/>
    <property type="evidence" value="ECO:0007669"/>
    <property type="project" value="UniProtKB-UniRule"/>
</dbReference>
<dbReference type="GO" id="GO:0000049">
    <property type="term" value="F:tRNA binding"/>
    <property type="evidence" value="ECO:0007669"/>
    <property type="project" value="UniProtKB-UniRule"/>
</dbReference>
<dbReference type="GO" id="GO:0070475">
    <property type="term" value="P:rRNA base methylation"/>
    <property type="evidence" value="ECO:0007669"/>
    <property type="project" value="UniProtKB-UniRule"/>
</dbReference>
<dbReference type="GO" id="GO:0030488">
    <property type="term" value="P:tRNA methylation"/>
    <property type="evidence" value="ECO:0007669"/>
    <property type="project" value="UniProtKB-UniRule"/>
</dbReference>
<dbReference type="CDD" id="cd01335">
    <property type="entry name" value="Radical_SAM"/>
    <property type="match status" value="1"/>
</dbReference>
<dbReference type="FunFam" id="3.20.20.70:FF:000014">
    <property type="entry name" value="Probable dual-specificity RNA methyltransferase RlmN"/>
    <property type="match status" value="1"/>
</dbReference>
<dbReference type="Gene3D" id="1.10.150.530">
    <property type="match status" value="1"/>
</dbReference>
<dbReference type="Gene3D" id="3.20.20.70">
    <property type="entry name" value="Aldolase class I"/>
    <property type="match status" value="1"/>
</dbReference>
<dbReference type="HAMAP" id="MF_01849">
    <property type="entry name" value="RNA_methyltr_RlmN"/>
    <property type="match status" value="1"/>
</dbReference>
<dbReference type="InterPro" id="IPR013785">
    <property type="entry name" value="Aldolase_TIM"/>
</dbReference>
<dbReference type="InterPro" id="IPR006638">
    <property type="entry name" value="Elp3/MiaA/NifB-like_rSAM"/>
</dbReference>
<dbReference type="InterPro" id="IPR040072">
    <property type="entry name" value="Methyltransferase_A"/>
</dbReference>
<dbReference type="InterPro" id="IPR048641">
    <property type="entry name" value="RlmN_N"/>
</dbReference>
<dbReference type="InterPro" id="IPR027492">
    <property type="entry name" value="RNA_MTrfase_RlmN"/>
</dbReference>
<dbReference type="InterPro" id="IPR004383">
    <property type="entry name" value="rRNA_lsu_MTrfase_RlmN/Cfr"/>
</dbReference>
<dbReference type="InterPro" id="IPR007197">
    <property type="entry name" value="rSAM"/>
</dbReference>
<dbReference type="NCBIfam" id="TIGR00048">
    <property type="entry name" value="rRNA_mod_RlmN"/>
    <property type="match status" value="1"/>
</dbReference>
<dbReference type="PANTHER" id="PTHR30544">
    <property type="entry name" value="23S RRNA METHYLTRANSFERASE"/>
    <property type="match status" value="1"/>
</dbReference>
<dbReference type="PANTHER" id="PTHR30544:SF5">
    <property type="entry name" value="RADICAL SAM CORE DOMAIN-CONTAINING PROTEIN"/>
    <property type="match status" value="1"/>
</dbReference>
<dbReference type="Pfam" id="PF04055">
    <property type="entry name" value="Radical_SAM"/>
    <property type="match status" value="1"/>
</dbReference>
<dbReference type="Pfam" id="PF21016">
    <property type="entry name" value="RlmN_N"/>
    <property type="match status" value="1"/>
</dbReference>
<dbReference type="PIRSF" id="PIRSF006004">
    <property type="entry name" value="CHP00048"/>
    <property type="match status" value="1"/>
</dbReference>
<dbReference type="SFLD" id="SFLDF00275">
    <property type="entry name" value="adenosine_C2_methyltransferase"/>
    <property type="match status" value="1"/>
</dbReference>
<dbReference type="SFLD" id="SFLDS00029">
    <property type="entry name" value="Radical_SAM"/>
    <property type="match status" value="1"/>
</dbReference>
<dbReference type="SMART" id="SM00729">
    <property type="entry name" value="Elp3"/>
    <property type="match status" value="1"/>
</dbReference>
<dbReference type="SUPFAM" id="SSF102114">
    <property type="entry name" value="Radical SAM enzymes"/>
    <property type="match status" value="1"/>
</dbReference>
<dbReference type="PROSITE" id="PS51918">
    <property type="entry name" value="RADICAL_SAM"/>
    <property type="match status" value="1"/>
</dbReference>
<name>RLMN_BDEBA</name>
<keyword id="KW-0004">4Fe-4S</keyword>
<keyword id="KW-0963">Cytoplasm</keyword>
<keyword id="KW-1015">Disulfide bond</keyword>
<keyword id="KW-0408">Iron</keyword>
<keyword id="KW-0411">Iron-sulfur</keyword>
<keyword id="KW-0479">Metal-binding</keyword>
<keyword id="KW-0489">Methyltransferase</keyword>
<keyword id="KW-1185">Reference proteome</keyword>
<keyword id="KW-0698">rRNA processing</keyword>
<keyword id="KW-0949">S-adenosyl-L-methionine</keyword>
<keyword id="KW-0808">Transferase</keyword>
<keyword id="KW-0819">tRNA processing</keyword>
<protein>
    <recommendedName>
        <fullName evidence="1">Dual-specificity RNA methyltransferase RlmN</fullName>
        <ecNumber evidence="1">2.1.1.192</ecNumber>
    </recommendedName>
    <alternativeName>
        <fullName evidence="1">23S rRNA (adenine(2503)-C(2))-methyltransferase</fullName>
    </alternativeName>
    <alternativeName>
        <fullName evidence="1">23S rRNA m2A2503 methyltransferase</fullName>
    </alternativeName>
    <alternativeName>
        <fullName evidence="1">Ribosomal RNA large subunit methyltransferase N</fullName>
    </alternativeName>
    <alternativeName>
        <fullName evidence="1">tRNA (adenine(37)-C(2))-methyltransferase</fullName>
    </alternativeName>
    <alternativeName>
        <fullName evidence="1">tRNA m2A37 methyltransferase</fullName>
    </alternativeName>
</protein>
<feature type="chain" id="PRO_0000350048" description="Dual-specificity RNA methyltransferase RlmN">
    <location>
        <begin position="1"/>
        <end position="399"/>
    </location>
</feature>
<feature type="domain" description="Radical SAM core" evidence="2">
    <location>
        <begin position="122"/>
        <end position="352"/>
    </location>
</feature>
<feature type="active site" description="Proton acceptor" evidence="1">
    <location>
        <position position="116"/>
    </location>
</feature>
<feature type="active site" description="S-methylcysteine intermediate" evidence="1">
    <location>
        <position position="357"/>
    </location>
</feature>
<feature type="binding site" evidence="1">
    <location>
        <position position="136"/>
    </location>
    <ligand>
        <name>[4Fe-4S] cluster</name>
        <dbReference type="ChEBI" id="CHEBI:49883"/>
        <note>4Fe-4S-S-AdoMet</note>
    </ligand>
</feature>
<feature type="binding site" evidence="1">
    <location>
        <position position="140"/>
    </location>
    <ligand>
        <name>[4Fe-4S] cluster</name>
        <dbReference type="ChEBI" id="CHEBI:49883"/>
        <note>4Fe-4S-S-AdoMet</note>
    </ligand>
</feature>
<feature type="binding site" evidence="1">
    <location>
        <position position="143"/>
    </location>
    <ligand>
        <name>[4Fe-4S] cluster</name>
        <dbReference type="ChEBI" id="CHEBI:49883"/>
        <note>4Fe-4S-S-AdoMet</note>
    </ligand>
</feature>
<feature type="binding site" evidence="1">
    <location>
        <begin position="185"/>
        <end position="186"/>
    </location>
    <ligand>
        <name>S-adenosyl-L-methionine</name>
        <dbReference type="ChEBI" id="CHEBI:59789"/>
    </ligand>
</feature>
<feature type="binding site" evidence="1">
    <location>
        <position position="217"/>
    </location>
    <ligand>
        <name>S-adenosyl-L-methionine</name>
        <dbReference type="ChEBI" id="CHEBI:59789"/>
    </ligand>
</feature>
<feature type="binding site" evidence="1">
    <location>
        <begin position="238"/>
        <end position="240"/>
    </location>
    <ligand>
        <name>S-adenosyl-L-methionine</name>
        <dbReference type="ChEBI" id="CHEBI:59789"/>
    </ligand>
</feature>
<feature type="binding site" evidence="1">
    <location>
        <position position="314"/>
    </location>
    <ligand>
        <name>S-adenosyl-L-methionine</name>
        <dbReference type="ChEBI" id="CHEBI:59789"/>
    </ligand>
</feature>
<feature type="disulfide bond" description="(transient)" evidence="1">
    <location>
        <begin position="129"/>
        <end position="357"/>
    </location>
</feature>
<organism>
    <name type="scientific">Bdellovibrio bacteriovorus (strain ATCC 15356 / DSM 50701 / NCIMB 9529 / HD100)</name>
    <dbReference type="NCBI Taxonomy" id="264462"/>
    <lineage>
        <taxon>Bacteria</taxon>
        <taxon>Pseudomonadati</taxon>
        <taxon>Bdellovibrionota</taxon>
        <taxon>Bdellovibrionia</taxon>
        <taxon>Bdellovibrionales</taxon>
        <taxon>Pseudobdellovibrionaceae</taxon>
        <taxon>Bdellovibrio</taxon>
    </lineage>
</organism>
<sequence>MEANAGSTLAPVNYSDDNVAKPLENQPVNFYSLTLEDLKAYIKSKGKEQFRAQQIFKWVYEQRVTDPEQMTNLSKEFRQDLPSMLSFDLPPVLQHLKSVDGTQKFLFDMKDGMSVEAVVIPSEDRLTLCISSEVGCNMACKFCFTGKQKLKRRLRTEDIVGQFMQVHDRLAEGQRITNIVFMGMGEPLDNPEAVFKTIDVIHSPWGINLSRKKITVSTSGIVPEMWRVADAKVRLAVSLNGPNDEIRSQVMPINKRWDTKALLEACKEHYRVSKDKITFEYVLLKGITDQLEHARQLVKLVKDVPCKINIIPFNEHPGSGYERPDDDTIQAFHTELMNLGAHVLLRRSMGRDIFAACGQLTTVKERPQTMDISNSRLAGLPKYKRELLAAQEAEQNNQH</sequence>
<reference key="1">
    <citation type="journal article" date="2004" name="Science">
        <title>A predator unmasked: life cycle of Bdellovibrio bacteriovorus from a genomic perspective.</title>
        <authorList>
            <person name="Rendulic S."/>
            <person name="Jagtap P."/>
            <person name="Rosinus A."/>
            <person name="Eppinger M."/>
            <person name="Baar C."/>
            <person name="Lanz C."/>
            <person name="Keller H."/>
            <person name="Lambert C."/>
            <person name="Evans K.J."/>
            <person name="Goesmann A."/>
            <person name="Meyer F."/>
            <person name="Sockett R.E."/>
            <person name="Schuster S.C."/>
        </authorList>
    </citation>
    <scope>NUCLEOTIDE SEQUENCE [LARGE SCALE GENOMIC DNA]</scope>
    <source>
        <strain>ATCC 15356 / DSM 50701 / NCIMB 9529 / HD100</strain>
    </source>
</reference>